<organism>
    <name type="scientific">Actinobacillus pleuropneumoniae serotype 3 (strain JL03)</name>
    <dbReference type="NCBI Taxonomy" id="434271"/>
    <lineage>
        <taxon>Bacteria</taxon>
        <taxon>Pseudomonadati</taxon>
        <taxon>Pseudomonadota</taxon>
        <taxon>Gammaproteobacteria</taxon>
        <taxon>Pasteurellales</taxon>
        <taxon>Pasteurellaceae</taxon>
        <taxon>Actinobacillus</taxon>
    </lineage>
</organism>
<keyword id="KW-0028">Amino-acid biosynthesis</keyword>
<keyword id="KW-0061">Asparagine biosynthesis</keyword>
<keyword id="KW-0067">ATP-binding</keyword>
<keyword id="KW-0963">Cytoplasm</keyword>
<keyword id="KW-0436">Ligase</keyword>
<keyword id="KW-0547">Nucleotide-binding</keyword>
<sequence>MKKTFILQQQEISFVKNTFTQYLIDKLGIIEVQGPILSQVGNGMQDNLSGIEKAVQVNVKCIPGATFEVVHSLAKWKRHTLARFGFKEGEGLFVHMKALRPDEDSLDPTHSVYVDQWDWEKVIPEGRRNFDFLKETVNEIYKAIRLTELAVEARFDIPSILPKQITFVHSEELVQRYPNMTGKERENAICKEHGAVFLIGIGGKLSDGKPHDGRAPDYDDWTTESENGYKGLNGDILVWNEQLGTAFELSSMGIRVDEKALRLQVELTGDQDRLEMDWHKDLLAGRLPLSIGGGIGQSRLVMFLLRKAHIGEVQSSVWPKAMLEKYKNIL</sequence>
<protein>
    <recommendedName>
        <fullName evidence="1">Aspartate--ammonia ligase</fullName>
        <ecNumber evidence="1">6.3.1.1</ecNumber>
    </recommendedName>
    <alternativeName>
        <fullName evidence="1">Asparagine synthetase A</fullName>
    </alternativeName>
</protein>
<proteinExistence type="inferred from homology"/>
<evidence type="ECO:0000255" key="1">
    <source>
        <dbReference type="HAMAP-Rule" id="MF_00555"/>
    </source>
</evidence>
<name>ASNA_ACTPJ</name>
<reference key="1">
    <citation type="journal article" date="2008" name="PLoS ONE">
        <title>Genome biology of Actinobacillus pleuropneumoniae JL03, an isolate of serotype 3 prevalent in China.</title>
        <authorList>
            <person name="Xu Z."/>
            <person name="Zhou Y."/>
            <person name="Li L."/>
            <person name="Zhou R."/>
            <person name="Xiao S."/>
            <person name="Wan Y."/>
            <person name="Zhang S."/>
            <person name="Wang K."/>
            <person name="Li W."/>
            <person name="Li L."/>
            <person name="Jin H."/>
            <person name="Kang M."/>
            <person name="Dalai B."/>
            <person name="Li T."/>
            <person name="Liu L."/>
            <person name="Cheng Y."/>
            <person name="Zhang L."/>
            <person name="Xu T."/>
            <person name="Zheng H."/>
            <person name="Pu S."/>
            <person name="Wang B."/>
            <person name="Gu W."/>
            <person name="Zhang X.L."/>
            <person name="Zhu G.-F."/>
            <person name="Wang S."/>
            <person name="Zhao G.-P."/>
            <person name="Chen H."/>
        </authorList>
    </citation>
    <scope>NUCLEOTIDE SEQUENCE [LARGE SCALE GENOMIC DNA]</scope>
    <source>
        <strain>JL03</strain>
    </source>
</reference>
<comment type="catalytic activity">
    <reaction evidence="1">
        <text>L-aspartate + NH4(+) + ATP = L-asparagine + AMP + diphosphate + H(+)</text>
        <dbReference type="Rhea" id="RHEA:11372"/>
        <dbReference type="ChEBI" id="CHEBI:15378"/>
        <dbReference type="ChEBI" id="CHEBI:28938"/>
        <dbReference type="ChEBI" id="CHEBI:29991"/>
        <dbReference type="ChEBI" id="CHEBI:30616"/>
        <dbReference type="ChEBI" id="CHEBI:33019"/>
        <dbReference type="ChEBI" id="CHEBI:58048"/>
        <dbReference type="ChEBI" id="CHEBI:456215"/>
        <dbReference type="EC" id="6.3.1.1"/>
    </reaction>
</comment>
<comment type="pathway">
    <text evidence="1">Amino-acid biosynthesis; L-asparagine biosynthesis; L-asparagine from L-aspartate (ammonia route): step 1/1.</text>
</comment>
<comment type="subcellular location">
    <subcellularLocation>
        <location evidence="1">Cytoplasm</location>
    </subcellularLocation>
</comment>
<comment type="similarity">
    <text evidence="1">Belongs to the class-II aminoacyl-tRNA synthetase family. AsnA subfamily.</text>
</comment>
<gene>
    <name evidence="1" type="primary">asnA</name>
    <name type="ordered locus">APJL_1876</name>
</gene>
<dbReference type="EC" id="6.3.1.1" evidence="1"/>
<dbReference type="EMBL" id="CP000687">
    <property type="protein sequence ID" value="ABY70426.1"/>
    <property type="molecule type" value="Genomic_DNA"/>
</dbReference>
<dbReference type="RefSeq" id="WP_005602692.1">
    <property type="nucleotide sequence ID" value="NC_010278.1"/>
</dbReference>
<dbReference type="SMR" id="B0BT12"/>
<dbReference type="KEGG" id="apj:APJL_1876"/>
<dbReference type="HOGENOM" id="CLU_071543_0_0_6"/>
<dbReference type="UniPathway" id="UPA00134">
    <property type="reaction ID" value="UER00194"/>
</dbReference>
<dbReference type="Proteomes" id="UP000008547">
    <property type="component" value="Chromosome"/>
</dbReference>
<dbReference type="GO" id="GO:0005829">
    <property type="term" value="C:cytosol"/>
    <property type="evidence" value="ECO:0007669"/>
    <property type="project" value="TreeGrafter"/>
</dbReference>
<dbReference type="GO" id="GO:0004071">
    <property type="term" value="F:aspartate-ammonia ligase activity"/>
    <property type="evidence" value="ECO:0007669"/>
    <property type="project" value="UniProtKB-UniRule"/>
</dbReference>
<dbReference type="GO" id="GO:0005524">
    <property type="term" value="F:ATP binding"/>
    <property type="evidence" value="ECO:0007669"/>
    <property type="project" value="UniProtKB-UniRule"/>
</dbReference>
<dbReference type="GO" id="GO:0070981">
    <property type="term" value="P:L-asparagine biosynthetic process"/>
    <property type="evidence" value="ECO:0007669"/>
    <property type="project" value="UniProtKB-UniRule"/>
</dbReference>
<dbReference type="CDD" id="cd00645">
    <property type="entry name" value="AsnA"/>
    <property type="match status" value="1"/>
</dbReference>
<dbReference type="Gene3D" id="3.30.930.10">
    <property type="entry name" value="Bira Bifunctional Protein, Domain 2"/>
    <property type="match status" value="1"/>
</dbReference>
<dbReference type="HAMAP" id="MF_00555">
    <property type="entry name" value="AsnA"/>
    <property type="match status" value="1"/>
</dbReference>
<dbReference type="InterPro" id="IPR006195">
    <property type="entry name" value="aa-tRNA-synth_II"/>
</dbReference>
<dbReference type="InterPro" id="IPR045864">
    <property type="entry name" value="aa-tRNA-synth_II/BPL/LPL"/>
</dbReference>
<dbReference type="InterPro" id="IPR004618">
    <property type="entry name" value="AsnA"/>
</dbReference>
<dbReference type="NCBIfam" id="TIGR00669">
    <property type="entry name" value="asnA"/>
    <property type="match status" value="1"/>
</dbReference>
<dbReference type="PANTHER" id="PTHR30073">
    <property type="entry name" value="ASPARTATE--AMMONIA LIGASE"/>
    <property type="match status" value="1"/>
</dbReference>
<dbReference type="PANTHER" id="PTHR30073:SF5">
    <property type="entry name" value="ASPARTATE--AMMONIA LIGASE"/>
    <property type="match status" value="1"/>
</dbReference>
<dbReference type="Pfam" id="PF03590">
    <property type="entry name" value="AsnA"/>
    <property type="match status" value="1"/>
</dbReference>
<dbReference type="PIRSF" id="PIRSF001555">
    <property type="entry name" value="Asp_ammon_ligase"/>
    <property type="match status" value="1"/>
</dbReference>
<dbReference type="SUPFAM" id="SSF55681">
    <property type="entry name" value="Class II aaRS and biotin synthetases"/>
    <property type="match status" value="1"/>
</dbReference>
<dbReference type="PROSITE" id="PS50862">
    <property type="entry name" value="AA_TRNA_LIGASE_II"/>
    <property type="match status" value="1"/>
</dbReference>
<accession>B0BT12</accession>
<feature type="chain" id="PRO_1000129105" description="Aspartate--ammonia ligase">
    <location>
        <begin position="1"/>
        <end position="330"/>
    </location>
</feature>